<comment type="function">
    <text evidence="1">Aspartyl-tRNA synthetase with relaxed tRNA specificity since it is able to aspartylate not only its cognate tRNA(Asp) but also tRNA(Asn). Reaction proceeds in two steps: L-aspartate is first activated by ATP to form Asp-AMP and then transferred to the acceptor end of tRNA(Asp/Asn).</text>
</comment>
<comment type="catalytic activity">
    <reaction evidence="1">
        <text>tRNA(Asx) + L-aspartate + ATP = L-aspartyl-tRNA(Asx) + AMP + diphosphate</text>
        <dbReference type="Rhea" id="RHEA:18349"/>
        <dbReference type="Rhea" id="RHEA-COMP:9710"/>
        <dbReference type="Rhea" id="RHEA-COMP:9711"/>
        <dbReference type="ChEBI" id="CHEBI:29991"/>
        <dbReference type="ChEBI" id="CHEBI:30616"/>
        <dbReference type="ChEBI" id="CHEBI:33019"/>
        <dbReference type="ChEBI" id="CHEBI:78442"/>
        <dbReference type="ChEBI" id="CHEBI:78516"/>
        <dbReference type="ChEBI" id="CHEBI:456215"/>
        <dbReference type="EC" id="6.1.1.23"/>
    </reaction>
</comment>
<comment type="subunit">
    <text evidence="1">Homodimer.</text>
</comment>
<comment type="subcellular location">
    <subcellularLocation>
        <location evidence="1">Cytoplasm</location>
    </subcellularLocation>
</comment>
<comment type="similarity">
    <text evidence="1">Belongs to the class-II aminoacyl-tRNA synthetase family. Type 1 subfamily.</text>
</comment>
<proteinExistence type="inferred from homology"/>
<accession>A4X5Y3</accession>
<sequence length="607" mass="66462">MIRTHDAGSLRATDAGSTVTLAGWVARRRDHGGVIFVDLRDGSGVAQVVLREEDAHVLRNEYCVRVTGEVTRRPEGNENPELATGEVEVTAEELEVLSEAAPLPLPVDDQIEAGDDVRLRYRYLDLRRSGPASALRLRSAANQIARTVLHERDFLEIETPTLTRSTPEGARDFLVPVRLQPGTWYALPQSPQLFKQLLMVGGMERYYQIARCYRDEDFRADRQPEFTQLDIEMSFVTEDDVIDLGEAIVSRLWRELAGHQITRPIPRITWHEAMARYGSDKPDLRYGVELTELTDYLRGTRFRVFAGAIEAGGYVGAVVMPGGAAQSRKELDGWQDWAKARGAKGLAYVVLDAETGEARGPVAKNLSTEHLAGLADVVGAKPGDAIFFAAGAESRAAQELLGAARVEIARRANLVDESAWAFCWVVDAPMFERVTDREEAGAGGWTAVHHPFTAPNAEWMDRFEEAPDRALAYAYDIVCNGNEIGGGSIRIHRGDVQQRVFDLLGITPEQARDKFGFLLEAFKYGPPPHGGIAFGWDRVCMLLAGADSIREVIAFPKTRGGFDPLTAAPTPITAAQRLEAGVDARPKPEARAQAGTAGPAAPVADPT</sequence>
<keyword id="KW-0030">Aminoacyl-tRNA synthetase</keyword>
<keyword id="KW-0067">ATP-binding</keyword>
<keyword id="KW-0963">Cytoplasm</keyword>
<keyword id="KW-0436">Ligase</keyword>
<keyword id="KW-0547">Nucleotide-binding</keyword>
<keyword id="KW-0648">Protein biosynthesis</keyword>
<keyword id="KW-1185">Reference proteome</keyword>
<protein>
    <recommendedName>
        <fullName evidence="1">Aspartate--tRNA(Asp/Asn) ligase</fullName>
        <ecNumber evidence="1">6.1.1.23</ecNumber>
    </recommendedName>
    <alternativeName>
        <fullName evidence="1">Aspartyl-tRNA synthetase</fullName>
        <shortName evidence="1">AspRS</shortName>
    </alternativeName>
    <alternativeName>
        <fullName evidence="1">Non-discriminating aspartyl-tRNA synthetase</fullName>
        <shortName evidence="1">ND-AspRS</shortName>
    </alternativeName>
</protein>
<gene>
    <name evidence="1" type="primary">aspS</name>
    <name type="ordered locus">Strop_1821</name>
</gene>
<dbReference type="EC" id="6.1.1.23" evidence="1"/>
<dbReference type="EMBL" id="CP000667">
    <property type="protein sequence ID" value="ABP54283.1"/>
    <property type="molecule type" value="Genomic_DNA"/>
</dbReference>
<dbReference type="RefSeq" id="WP_011905714.1">
    <property type="nucleotide sequence ID" value="NC_009380.1"/>
</dbReference>
<dbReference type="SMR" id="A4X5Y3"/>
<dbReference type="STRING" id="369723.Strop_1821"/>
<dbReference type="KEGG" id="stp:Strop_1821"/>
<dbReference type="PATRIC" id="fig|369723.5.peg.1869"/>
<dbReference type="eggNOG" id="COG0173">
    <property type="taxonomic scope" value="Bacteria"/>
</dbReference>
<dbReference type="HOGENOM" id="CLU_014330_3_2_11"/>
<dbReference type="Proteomes" id="UP000000235">
    <property type="component" value="Chromosome"/>
</dbReference>
<dbReference type="GO" id="GO:0005737">
    <property type="term" value="C:cytoplasm"/>
    <property type="evidence" value="ECO:0007669"/>
    <property type="project" value="UniProtKB-SubCell"/>
</dbReference>
<dbReference type="GO" id="GO:0004815">
    <property type="term" value="F:aspartate-tRNA ligase activity"/>
    <property type="evidence" value="ECO:0007669"/>
    <property type="project" value="UniProtKB-UniRule"/>
</dbReference>
<dbReference type="GO" id="GO:0050560">
    <property type="term" value="F:aspartate-tRNA(Asn) ligase activity"/>
    <property type="evidence" value="ECO:0007669"/>
    <property type="project" value="UniProtKB-EC"/>
</dbReference>
<dbReference type="GO" id="GO:0005524">
    <property type="term" value="F:ATP binding"/>
    <property type="evidence" value="ECO:0007669"/>
    <property type="project" value="UniProtKB-UniRule"/>
</dbReference>
<dbReference type="GO" id="GO:0003676">
    <property type="term" value="F:nucleic acid binding"/>
    <property type="evidence" value="ECO:0007669"/>
    <property type="project" value="InterPro"/>
</dbReference>
<dbReference type="GO" id="GO:0006422">
    <property type="term" value="P:aspartyl-tRNA aminoacylation"/>
    <property type="evidence" value="ECO:0007669"/>
    <property type="project" value="UniProtKB-UniRule"/>
</dbReference>
<dbReference type="CDD" id="cd00777">
    <property type="entry name" value="AspRS_core"/>
    <property type="match status" value="1"/>
</dbReference>
<dbReference type="CDD" id="cd04317">
    <property type="entry name" value="EcAspRS_like_N"/>
    <property type="match status" value="1"/>
</dbReference>
<dbReference type="Gene3D" id="3.30.930.10">
    <property type="entry name" value="Bira Bifunctional Protein, Domain 2"/>
    <property type="match status" value="1"/>
</dbReference>
<dbReference type="Gene3D" id="3.30.1360.30">
    <property type="entry name" value="GAD-like domain"/>
    <property type="match status" value="1"/>
</dbReference>
<dbReference type="Gene3D" id="2.40.50.140">
    <property type="entry name" value="Nucleic acid-binding proteins"/>
    <property type="match status" value="1"/>
</dbReference>
<dbReference type="HAMAP" id="MF_00044">
    <property type="entry name" value="Asp_tRNA_synth_type1"/>
    <property type="match status" value="1"/>
</dbReference>
<dbReference type="InterPro" id="IPR004364">
    <property type="entry name" value="Aa-tRNA-synt_II"/>
</dbReference>
<dbReference type="InterPro" id="IPR006195">
    <property type="entry name" value="aa-tRNA-synth_II"/>
</dbReference>
<dbReference type="InterPro" id="IPR045864">
    <property type="entry name" value="aa-tRNA-synth_II/BPL/LPL"/>
</dbReference>
<dbReference type="InterPro" id="IPR004524">
    <property type="entry name" value="Asp-tRNA-ligase_1"/>
</dbReference>
<dbReference type="InterPro" id="IPR047089">
    <property type="entry name" value="Asp-tRNA-ligase_1_N"/>
</dbReference>
<dbReference type="InterPro" id="IPR002312">
    <property type="entry name" value="Asp/Asn-tRNA-synth_IIb"/>
</dbReference>
<dbReference type="InterPro" id="IPR047090">
    <property type="entry name" value="AspRS_core"/>
</dbReference>
<dbReference type="InterPro" id="IPR004115">
    <property type="entry name" value="GAD-like_sf"/>
</dbReference>
<dbReference type="InterPro" id="IPR029351">
    <property type="entry name" value="GAD_dom"/>
</dbReference>
<dbReference type="InterPro" id="IPR012340">
    <property type="entry name" value="NA-bd_OB-fold"/>
</dbReference>
<dbReference type="InterPro" id="IPR004365">
    <property type="entry name" value="NA-bd_OB_tRNA"/>
</dbReference>
<dbReference type="NCBIfam" id="TIGR00459">
    <property type="entry name" value="aspS_bact"/>
    <property type="match status" value="1"/>
</dbReference>
<dbReference type="NCBIfam" id="NF001750">
    <property type="entry name" value="PRK00476.1"/>
    <property type="match status" value="1"/>
</dbReference>
<dbReference type="PANTHER" id="PTHR22594:SF5">
    <property type="entry name" value="ASPARTATE--TRNA LIGASE, MITOCHONDRIAL"/>
    <property type="match status" value="1"/>
</dbReference>
<dbReference type="PANTHER" id="PTHR22594">
    <property type="entry name" value="ASPARTYL/LYSYL-TRNA SYNTHETASE"/>
    <property type="match status" value="1"/>
</dbReference>
<dbReference type="Pfam" id="PF02938">
    <property type="entry name" value="GAD"/>
    <property type="match status" value="1"/>
</dbReference>
<dbReference type="Pfam" id="PF00152">
    <property type="entry name" value="tRNA-synt_2"/>
    <property type="match status" value="1"/>
</dbReference>
<dbReference type="Pfam" id="PF01336">
    <property type="entry name" value="tRNA_anti-codon"/>
    <property type="match status" value="1"/>
</dbReference>
<dbReference type="PRINTS" id="PR01042">
    <property type="entry name" value="TRNASYNTHASP"/>
</dbReference>
<dbReference type="SUPFAM" id="SSF55681">
    <property type="entry name" value="Class II aaRS and biotin synthetases"/>
    <property type="match status" value="1"/>
</dbReference>
<dbReference type="SUPFAM" id="SSF55261">
    <property type="entry name" value="GAD domain-like"/>
    <property type="match status" value="1"/>
</dbReference>
<dbReference type="SUPFAM" id="SSF50249">
    <property type="entry name" value="Nucleic acid-binding proteins"/>
    <property type="match status" value="1"/>
</dbReference>
<dbReference type="PROSITE" id="PS50862">
    <property type="entry name" value="AA_TRNA_LIGASE_II"/>
    <property type="match status" value="1"/>
</dbReference>
<evidence type="ECO:0000255" key="1">
    <source>
        <dbReference type="HAMAP-Rule" id="MF_00044"/>
    </source>
</evidence>
<evidence type="ECO:0000256" key="2">
    <source>
        <dbReference type="SAM" id="MobiDB-lite"/>
    </source>
</evidence>
<name>SYDND_SALTO</name>
<reference key="1">
    <citation type="journal article" date="2007" name="Proc. Natl. Acad. Sci. U.S.A.">
        <title>Genome sequencing reveals complex secondary metabolome in the marine actinomycete Salinispora tropica.</title>
        <authorList>
            <person name="Udwary D.W."/>
            <person name="Zeigler L."/>
            <person name="Asolkar R.N."/>
            <person name="Singan V."/>
            <person name="Lapidus A."/>
            <person name="Fenical W."/>
            <person name="Jensen P.R."/>
            <person name="Moore B.S."/>
        </authorList>
    </citation>
    <scope>NUCLEOTIDE SEQUENCE [LARGE SCALE GENOMIC DNA]</scope>
    <source>
        <strain>ATCC BAA-916 / DSM 44818 / JCM 13857 / NBRC 105044 / CNB-440</strain>
    </source>
</reference>
<organism>
    <name type="scientific">Salinispora tropica (strain ATCC BAA-916 / DSM 44818 / JCM 13857 / NBRC 105044 / CNB-440)</name>
    <dbReference type="NCBI Taxonomy" id="369723"/>
    <lineage>
        <taxon>Bacteria</taxon>
        <taxon>Bacillati</taxon>
        <taxon>Actinomycetota</taxon>
        <taxon>Actinomycetes</taxon>
        <taxon>Micromonosporales</taxon>
        <taxon>Micromonosporaceae</taxon>
        <taxon>Salinispora</taxon>
    </lineage>
</organism>
<feature type="chain" id="PRO_1000074719" description="Aspartate--tRNA(Asp/Asn) ligase">
    <location>
        <begin position="1"/>
        <end position="607"/>
    </location>
</feature>
<feature type="region of interest" description="Aspartate" evidence="1">
    <location>
        <begin position="192"/>
        <end position="195"/>
    </location>
</feature>
<feature type="region of interest" description="Disordered" evidence="2">
    <location>
        <begin position="578"/>
        <end position="607"/>
    </location>
</feature>
<feature type="compositionally biased region" description="Basic and acidic residues" evidence="2">
    <location>
        <begin position="580"/>
        <end position="590"/>
    </location>
</feature>
<feature type="compositionally biased region" description="Low complexity" evidence="2">
    <location>
        <begin position="591"/>
        <end position="607"/>
    </location>
</feature>
<feature type="binding site" evidence="1">
    <location>
        <position position="168"/>
    </location>
    <ligand>
        <name>L-aspartate</name>
        <dbReference type="ChEBI" id="CHEBI:29991"/>
    </ligand>
</feature>
<feature type="binding site" evidence="1">
    <location>
        <begin position="214"/>
        <end position="216"/>
    </location>
    <ligand>
        <name>ATP</name>
        <dbReference type="ChEBI" id="CHEBI:30616"/>
    </ligand>
</feature>
<feature type="binding site" evidence="1">
    <location>
        <position position="214"/>
    </location>
    <ligand>
        <name>L-aspartate</name>
        <dbReference type="ChEBI" id="CHEBI:29991"/>
    </ligand>
</feature>
<feature type="binding site" evidence="1">
    <location>
        <position position="223"/>
    </location>
    <ligand>
        <name>ATP</name>
        <dbReference type="ChEBI" id="CHEBI:30616"/>
    </ligand>
</feature>
<feature type="binding site" evidence="1">
    <location>
        <position position="449"/>
    </location>
    <ligand>
        <name>L-aspartate</name>
        <dbReference type="ChEBI" id="CHEBI:29991"/>
    </ligand>
</feature>
<feature type="binding site" evidence="1">
    <location>
        <position position="483"/>
    </location>
    <ligand>
        <name>ATP</name>
        <dbReference type="ChEBI" id="CHEBI:30616"/>
    </ligand>
</feature>
<feature type="binding site" evidence="1">
    <location>
        <position position="490"/>
    </location>
    <ligand>
        <name>L-aspartate</name>
        <dbReference type="ChEBI" id="CHEBI:29991"/>
    </ligand>
</feature>
<feature type="binding site" evidence="1">
    <location>
        <begin position="535"/>
        <end position="538"/>
    </location>
    <ligand>
        <name>ATP</name>
        <dbReference type="ChEBI" id="CHEBI:30616"/>
    </ligand>
</feature>
<feature type="site" description="Important for tRNA non-discrimination" evidence="1">
    <location>
        <position position="31"/>
    </location>
</feature>
<feature type="site" description="Important for tRNA non-discrimination" evidence="1">
    <location>
        <position position="76"/>
    </location>
</feature>